<sequence>MADPAECSIKVMCRFRPLNEAEILRGDKFIPKFKGEETVVIGQGKPYVFDRVLPPNTTQEQVYNACAKQIVKDVLEGYNGTIFAYGQTSSGKTHTMEGKLHDPQLMGIIPRIAHDIFDHIYSMDENLEFHIKVSYFEIYLDKIRDLLDVSKTNLAVHEDKNRVPYVKGCTERFVSSPEEVMDVIDEGKANRHVAVTNMNEHSSRSHSIFLINIKQENVETEKKLSGKLYLVDLAGSEKVSKTGAEGAVLDEAKNINKSLSALGNVISALAEGTKTHVPYRDSKMTRILQDSLGGNCRTTIVICCSPSVFNEAETKSTLMFGQRAKTIKNTVSVNLELTAEEWKKKYEKEKEKNKALKSVLQHLEMELNRWRNGEAVPEDEQISAKDQKSLEPCDNTPIIDNITPVVDGISAEKEKYDEEITSLYRQLDDKDDEINQQSQLAEKLKQQMLDQDELLASTRRDYEKIQEELTRLQIENEAAKDEVKEVLQALEELAVNYDQKSQEVEDKTRANEQLTDELAQKTTTLTTTQRELSQLQELSNHQKKRATEILNLLLKDLGEIGGIIGTNDVKTLADVNGVIEEEFTMARLYISKMKSEVKSLVNRSKQLESAQMDSNRKMNASERELAACQLLISQHEAKIKSLTDYMQNMEQKRRQLEESQDSLSEELAKLRAQEKMHEVSFQDKEKEHLTRLQDAEEVKKALEQQMESHREAHQKQLSRLRDEIEEKQRIIDEIRDLNQKLQLEQERLSSDYNKLKIEDQEREVKLEKLLLLNDKREQAREDLKGLEETVSRELQTLHNLRKLFVQDLTTRVKKSVELDSDDGGGSAAQKQKISFLENNLEQLTKVHKQLVRDNADLRCELPKLEKRLRATAERVKALESALKEAKENAMRDRKRYQQEVDRIKEAVRAKNMARRAHSAQIAKPIRPGHYPASSPTAVHAVRGGGGGSSNSTHYQK</sequence>
<accession>P28738</accession>
<accession>Q6NXI9</accession>
<accession>Q9Z2F8</accession>
<proteinExistence type="evidence at protein level"/>
<gene>
    <name type="primary">Kif5c</name>
    <name type="synonym">Nkhc2</name>
</gene>
<protein>
    <recommendedName>
        <fullName>Kinesin heavy chain isoform 5C</fullName>
        <ecNumber evidence="2">3.6.4.-</ecNumber>
    </recommendedName>
    <alternativeName>
        <fullName>Kinesin heavy chain neuron-specific 2</fullName>
    </alternativeName>
    <alternativeName>
        <fullName evidence="2">Kinesin-1</fullName>
    </alternativeName>
</protein>
<feature type="chain" id="PRO_0000125356" description="Kinesin heavy chain isoform 5C">
    <location>
        <begin position="1"/>
        <end position="956"/>
    </location>
</feature>
<feature type="domain" description="Kinesin motor" evidence="3">
    <location>
        <begin position="8"/>
        <end position="327"/>
    </location>
</feature>
<feature type="region of interest" description="Microtubule-binding">
    <location>
        <begin position="174"/>
        <end position="315"/>
    </location>
</feature>
<feature type="region of interest" description="Globular">
    <location>
        <begin position="859"/>
        <end position="956"/>
    </location>
</feature>
<feature type="region of interest" description="Disordered" evidence="4">
    <location>
        <begin position="910"/>
        <end position="956"/>
    </location>
</feature>
<feature type="coiled-coil region">
    <location>
        <begin position="406"/>
        <end position="923"/>
    </location>
</feature>
<feature type="binding site" evidence="2">
    <location>
        <position position="87"/>
    </location>
    <ligand>
        <name>ATP</name>
        <dbReference type="ChEBI" id="CHEBI:30616"/>
    </ligand>
</feature>
<feature type="binding site" evidence="2">
    <location>
        <position position="89"/>
    </location>
    <ligand>
        <name>ATP</name>
        <dbReference type="ChEBI" id="CHEBI:30616"/>
    </ligand>
</feature>
<feature type="binding site" evidence="2">
    <location>
        <position position="90"/>
    </location>
    <ligand>
        <name>ATP</name>
        <dbReference type="ChEBI" id="CHEBI:30616"/>
    </ligand>
</feature>
<feature type="binding site" evidence="2">
    <location>
        <position position="91"/>
    </location>
    <ligand>
        <name>ATP</name>
        <dbReference type="ChEBI" id="CHEBI:30616"/>
    </ligand>
</feature>
<feature type="binding site" evidence="2">
    <location>
        <position position="92"/>
    </location>
    <ligand>
        <name>ATP</name>
        <dbReference type="ChEBI" id="CHEBI:30616"/>
    </ligand>
</feature>
<feature type="binding site" evidence="2">
    <location>
        <position position="93"/>
    </location>
    <ligand>
        <name>ATP</name>
        <dbReference type="ChEBI" id="CHEBI:30616"/>
    </ligand>
</feature>
<feature type="binding site" evidence="2">
    <location>
        <position position="94"/>
    </location>
    <ligand>
        <name>ATP</name>
        <dbReference type="ChEBI" id="CHEBI:30616"/>
    </ligand>
</feature>
<feature type="binding site" evidence="2">
    <location>
        <position position="99"/>
    </location>
    <ligand>
        <name>ATP</name>
        <dbReference type="ChEBI" id="CHEBI:30616"/>
    </ligand>
</feature>
<feature type="modified residue" description="Phosphothreonine" evidence="10">
    <location>
        <position position="403"/>
    </location>
</feature>
<feature type="sequence conflict" description="In Ref. 2; AAC79804." evidence="9" ref="2">
    <original>Q</original>
    <variation>H</variation>
    <location>
        <position position="387"/>
    </location>
</feature>
<feature type="sequence conflict" description="In Ref. 2; AAC79804." evidence="9" ref="2">
    <original>R</original>
    <variation>I</variation>
    <location>
        <position position="792"/>
    </location>
</feature>
<feature type="strand" evidence="12">
    <location>
        <begin position="10"/>
        <end position="15"/>
    </location>
</feature>
<feature type="helix" evidence="12">
    <location>
        <begin position="20"/>
        <end position="24"/>
    </location>
</feature>
<feature type="strand" evidence="12">
    <location>
        <begin position="31"/>
        <end position="34"/>
    </location>
</feature>
<feature type="turn" evidence="12">
    <location>
        <begin position="35"/>
        <end position="37"/>
    </location>
</feature>
<feature type="strand" evidence="12">
    <location>
        <begin position="38"/>
        <end position="41"/>
    </location>
</feature>
<feature type="strand" evidence="12">
    <location>
        <begin position="46"/>
        <end position="48"/>
    </location>
</feature>
<feature type="strand" evidence="12">
    <location>
        <begin position="50"/>
        <end position="53"/>
    </location>
</feature>
<feature type="helix" evidence="12">
    <location>
        <begin position="59"/>
        <end position="66"/>
    </location>
</feature>
<feature type="helix" evidence="12">
    <location>
        <begin position="68"/>
        <end position="74"/>
    </location>
</feature>
<feature type="turn" evidence="12">
    <location>
        <begin position="75"/>
        <end position="77"/>
    </location>
</feature>
<feature type="strand" evidence="12">
    <location>
        <begin position="80"/>
        <end position="86"/>
    </location>
</feature>
<feature type="helix" evidence="12">
    <location>
        <begin position="92"/>
        <end position="96"/>
    </location>
</feature>
<feature type="turn" evidence="12">
    <location>
        <begin position="103"/>
        <end position="105"/>
    </location>
</feature>
<feature type="helix" evidence="12">
    <location>
        <begin position="108"/>
        <end position="122"/>
    </location>
</feature>
<feature type="strand" evidence="12">
    <location>
        <begin position="125"/>
        <end position="139"/>
    </location>
</feature>
<feature type="strand" evidence="12">
    <location>
        <begin position="142"/>
        <end position="147"/>
    </location>
</feature>
<feature type="strand" evidence="12">
    <location>
        <begin position="156"/>
        <end position="158"/>
    </location>
</feature>
<feature type="strand" evidence="12">
    <location>
        <begin position="164"/>
        <end position="168"/>
    </location>
</feature>
<feature type="strand" evidence="12">
    <location>
        <begin position="172"/>
        <end position="176"/>
    </location>
</feature>
<feature type="helix" evidence="12">
    <location>
        <begin position="177"/>
        <end position="191"/>
    </location>
</feature>
<feature type="helix" evidence="12">
    <location>
        <begin position="199"/>
        <end position="202"/>
    </location>
</feature>
<feature type="strand" evidence="12">
    <location>
        <begin position="206"/>
        <end position="216"/>
    </location>
</feature>
<feature type="turn" evidence="12">
    <location>
        <begin position="218"/>
        <end position="220"/>
    </location>
</feature>
<feature type="strand" evidence="12">
    <location>
        <begin position="223"/>
        <end position="232"/>
    </location>
</feature>
<feature type="helix" evidence="12">
    <location>
        <begin position="258"/>
        <end position="267"/>
    </location>
</feature>
<feature type="helix" evidence="11">
    <location>
        <begin position="279"/>
        <end position="281"/>
    </location>
</feature>
<feature type="helix" evidence="12">
    <location>
        <begin position="283"/>
        <end position="287"/>
    </location>
</feature>
<feature type="turn" evidence="12">
    <location>
        <begin position="288"/>
        <end position="293"/>
    </location>
</feature>
<feature type="strand" evidence="12">
    <location>
        <begin position="294"/>
        <end position="304"/>
    </location>
</feature>
<feature type="strand" evidence="12">
    <location>
        <begin position="306"/>
        <end position="308"/>
    </location>
</feature>
<feature type="helix" evidence="12">
    <location>
        <begin position="311"/>
        <end position="324"/>
    </location>
</feature>
<keyword id="KW-0002">3D-structure</keyword>
<keyword id="KW-0067">ATP-binding</keyword>
<keyword id="KW-0966">Cell projection</keyword>
<keyword id="KW-0175">Coiled coil</keyword>
<keyword id="KW-0963">Cytoplasm</keyword>
<keyword id="KW-0206">Cytoskeleton</keyword>
<keyword id="KW-0903">Direct protein sequencing</keyword>
<keyword id="KW-0378">Hydrolase</keyword>
<keyword id="KW-0493">Microtubule</keyword>
<keyword id="KW-0505">Motor protein</keyword>
<keyword id="KW-0547">Nucleotide-binding</keyword>
<keyword id="KW-0597">Phosphoprotein</keyword>
<keyword id="KW-1185">Reference proteome</keyword>
<keyword id="KW-0813">Transport</keyword>
<comment type="function">
    <text evidence="1 2 7">Microtubule-associated force-producing protein that may play a role in organelle transport. Has ATPase activity (By similarity). Involved in synaptic transmission (By similarity). Mediates dendritic trafficking of mRNAs (PubMed:19608740). Required for anterograde axonal transportation of MAPK8IP3/JIP3 which is essential for MAPK8IP3/JIP3 function in axon elongation (By similarity).</text>
</comment>
<comment type="catalytic activity">
    <reaction evidence="2">
        <text>ATP + H2O = ADP + phosphate + H(+)</text>
        <dbReference type="Rhea" id="RHEA:13065"/>
        <dbReference type="ChEBI" id="CHEBI:15377"/>
        <dbReference type="ChEBI" id="CHEBI:15378"/>
        <dbReference type="ChEBI" id="CHEBI:30616"/>
        <dbReference type="ChEBI" id="CHEBI:43474"/>
        <dbReference type="ChEBI" id="CHEBI:456216"/>
    </reaction>
</comment>
<comment type="subunit">
    <text evidence="1 2 5 6 8">Oligomer composed of two heavy chains and two light chains (PubMed:15286375). Interacts with GRIP1 (PubMed:11986669). Interacts with KLC3 and TRAK1 (By similarity). Interacts with ZFYVE27 (PubMed:21976701).</text>
</comment>
<comment type="interaction">
    <interactant intactId="EBI-2506834">
        <id>P28738</id>
    </interactant>
    <interactant intactId="EBI-301496">
        <id>Q9ESN9</id>
        <label>Mapk8ip3</label>
    </interactant>
    <organismsDiffer>false</organismsDiffer>
    <experiments>8</experiments>
</comment>
<comment type="subcellular location">
    <subcellularLocation>
        <location evidence="9">Cytoplasm</location>
        <location evidence="9">Cytoskeleton</location>
    </subcellularLocation>
    <subcellularLocation>
        <location evidence="1">Cell projection</location>
        <location evidence="1">Dendrite</location>
    </subcellularLocation>
    <text evidence="1">Abundant in distal regions of dendrites.</text>
</comment>
<comment type="domain">
    <text>Composed of three structural domains: a large globular N-terminal domain which is responsible for the motor activity of kinesin (it hydrolyzes ATP and binds microtubule), a central alpha-helical coiled coil domain that mediates the heavy chain dimerization; and a small globular C-terminal domain which interacts with other proteins (such as the kinesin light chains), vesicles and membranous organelles.</text>
</comment>
<comment type="similarity">
    <text evidence="3">Belongs to the TRAFAC class myosin-kinesin ATPase superfamily. Kinesin family. Kinesin subfamily.</text>
</comment>
<comment type="sequence caution" evidence="9">
    <conflict type="miscellaneous discrepancy">
        <sequence resource="EMBL-CDS" id="CAA43677"/>
    </conflict>
    <text>Chimeric cDNA. The C-terminus (up to position 300) corresponds to KIF5C sequence.</text>
</comment>
<reference key="1">
    <citation type="journal article" date="1990" name="Eur. J. Neurosci.">
        <title>A collection of cDNA clones with specific expression patterns in mouse brain.</title>
        <authorList>
            <person name="Kato K."/>
        </authorList>
    </citation>
    <scope>PRELIMINARY NUCLEOTIDE SEQUENCE [LARGE SCALE MRNA]</scope>
    <source>
        <strain>BALB/cJ</strain>
        <tissue>Brain</tissue>
    </source>
</reference>
<reference key="2">
    <citation type="journal article" date="1998" name="Genomics">
        <title>Chromosomal localization reveals three kinesin heavy chain genes in mouse.</title>
        <authorList>
            <person name="Xia C."/>
            <person name="Rahman A."/>
            <person name="Yang Z."/>
            <person name="Goldstein L.S.B."/>
        </authorList>
    </citation>
    <scope>NUCLEOTIDE SEQUENCE [MRNA]</scope>
    <source>
        <tissue>Brain</tissue>
    </source>
</reference>
<reference key="3">
    <citation type="journal article" date="2009" name="PLoS Biol.">
        <title>Lineage-specific biology revealed by a finished genome assembly of the mouse.</title>
        <authorList>
            <person name="Church D.M."/>
            <person name="Goodstadt L."/>
            <person name="Hillier L.W."/>
            <person name="Zody M.C."/>
            <person name="Goldstein S."/>
            <person name="She X."/>
            <person name="Bult C.J."/>
            <person name="Agarwala R."/>
            <person name="Cherry J.L."/>
            <person name="DiCuccio M."/>
            <person name="Hlavina W."/>
            <person name="Kapustin Y."/>
            <person name="Meric P."/>
            <person name="Maglott D."/>
            <person name="Birtle Z."/>
            <person name="Marques A.C."/>
            <person name="Graves T."/>
            <person name="Zhou S."/>
            <person name="Teague B."/>
            <person name="Potamousis K."/>
            <person name="Churas C."/>
            <person name="Place M."/>
            <person name="Herschleb J."/>
            <person name="Runnheim R."/>
            <person name="Forrest D."/>
            <person name="Amos-Landgraf J."/>
            <person name="Schwartz D.C."/>
            <person name="Cheng Z."/>
            <person name="Lindblad-Toh K."/>
            <person name="Eichler E.E."/>
            <person name="Ponting C.P."/>
        </authorList>
    </citation>
    <scope>NUCLEOTIDE SEQUENCE [LARGE SCALE GENOMIC DNA]</scope>
    <source>
        <strain>C57BL/6J</strain>
    </source>
</reference>
<reference key="4">
    <citation type="submission" date="2009-01" db="EMBL/GenBank/DDBJ databases">
        <authorList>
            <person name="Mural R.J."/>
            <person name="Adams M.D."/>
            <person name="Myers E.W."/>
            <person name="Smith H.O."/>
            <person name="Venter J.C."/>
        </authorList>
    </citation>
    <scope>NUCLEOTIDE SEQUENCE [LARGE SCALE GENOMIC DNA]</scope>
</reference>
<reference key="5">
    <citation type="journal article" date="2004" name="Genome Res.">
        <title>The status, quality, and expansion of the NIH full-length cDNA project: the Mammalian Gene Collection (MGC).</title>
        <authorList>
            <consortium name="The MGC Project Team"/>
        </authorList>
    </citation>
    <scope>NUCLEOTIDE SEQUENCE [LARGE SCALE MRNA]</scope>
    <source>
        <strain>C57BL/6J</strain>
        <tissue>Brain</tissue>
    </source>
</reference>
<reference key="6">
    <citation type="submission" date="2009-01" db="UniProtKB">
        <authorList>
            <person name="Lubec G."/>
            <person name="Sunyer B."/>
            <person name="Chen W.-Q."/>
        </authorList>
    </citation>
    <scope>PROTEIN SEQUENCE OF 133-142; 242-253; 258-274; 287-297; 546-555 AND 815-830</scope>
    <scope>IDENTIFICATION BY MASS SPECTROMETRY</scope>
    <source>
        <strain>OF1</strain>
        <tissue>Hippocampus</tissue>
    </source>
</reference>
<reference key="7">
    <citation type="journal article" date="2002" name="Nature">
        <title>Glutamate-receptor-interacting protein GRIP1 directly steers kinesin to dendrites.</title>
        <authorList>
            <person name="Setou M."/>
            <person name="Seog D.-H."/>
            <person name="Tanaka Y."/>
            <person name="Kanai Y."/>
            <person name="Takei Y."/>
            <person name="Kawagishi M."/>
            <person name="Hirokawa N."/>
        </authorList>
    </citation>
    <scope>INTERACTION WITH GRIP1</scope>
</reference>
<reference key="8">
    <citation type="journal article" date="2009" name="J. Biol. Chem.">
        <title>Dendritic mRNA targeting of Jacob and N-methyl-d-aspartate-induced nuclear translocation after calpain-mediated proteolysis.</title>
        <authorList>
            <person name="Kindler S."/>
            <person name="Dieterich D.C."/>
            <person name="Schutt J."/>
            <person name="Sahin J."/>
            <person name="Karpova A."/>
            <person name="Mikhaylova M."/>
            <person name="Schob C."/>
            <person name="Gundelfinger E.D."/>
            <person name="Kreienkamp H.J."/>
            <person name="Kreutz M.R."/>
        </authorList>
    </citation>
    <scope>FUNCTION</scope>
</reference>
<reference key="9">
    <citation type="journal article" date="2010" name="Cell">
        <title>A tissue-specific atlas of mouse protein phosphorylation and expression.</title>
        <authorList>
            <person name="Huttlin E.L."/>
            <person name="Jedrychowski M.P."/>
            <person name="Elias J.E."/>
            <person name="Goswami T."/>
            <person name="Rad R."/>
            <person name="Beausoleil S.A."/>
            <person name="Villen J."/>
            <person name="Haas W."/>
            <person name="Sowa M.E."/>
            <person name="Gygi S.P."/>
        </authorList>
    </citation>
    <scope>PHOSPHORYLATION [LARGE SCALE ANALYSIS] AT THR-403</scope>
    <scope>IDENTIFICATION BY MASS SPECTROMETRY [LARGE SCALE ANALYSIS]</scope>
    <source>
        <tissue>Brain</tissue>
    </source>
</reference>
<reference key="10">
    <citation type="journal article" date="2011" name="Mol. Biol. Cell">
        <title>Protrudin serves as an adaptor molecule that connects KIF5 and its cargoes in vesicular transport during process formation.</title>
        <authorList>
            <person name="Matsuzaki F."/>
            <person name="Shirane M."/>
            <person name="Matsumoto M."/>
            <person name="Nakayama K.I."/>
        </authorList>
    </citation>
    <scope>INTERACTION WITH ZFYVE27</scope>
</reference>
<reference key="11">
    <citation type="journal article" date="2004" name="Science">
        <title>KIF1A alternately uses two loops to bind microtubules.</title>
        <authorList>
            <person name="Nitta R."/>
            <person name="Kikkawa M."/>
            <person name="Okada Y."/>
            <person name="Hirokawa N."/>
        </authorList>
    </citation>
    <scope>X-RAY CRYSTALLOGRAPHY (1.85 ANGSTROMS) OF 329-334 IN COMPLEXES WITH KIF1A</scope>
    <scope>SUBUNIT</scope>
    <scope>INTERACTION WITH MICROTUBULES</scope>
</reference>
<dbReference type="EC" id="3.6.4.-" evidence="2"/>
<dbReference type="EMBL" id="X61435">
    <property type="protein sequence ID" value="CAA43677.1"/>
    <property type="status" value="ALT_SEQ"/>
    <property type="molecule type" value="mRNA"/>
</dbReference>
<dbReference type="EMBL" id="AF067180">
    <property type="protein sequence ID" value="AAC79804.1"/>
    <property type="molecule type" value="mRNA"/>
</dbReference>
<dbReference type="EMBL" id="AL845332">
    <property type="status" value="NOT_ANNOTATED_CDS"/>
    <property type="molecule type" value="Genomic_DNA"/>
</dbReference>
<dbReference type="EMBL" id="AL929069">
    <property type="status" value="NOT_ANNOTATED_CDS"/>
    <property type="molecule type" value="Genomic_DNA"/>
</dbReference>
<dbReference type="EMBL" id="CH466519">
    <property type="protein sequence ID" value="EDL26880.1"/>
    <property type="molecule type" value="Genomic_DNA"/>
</dbReference>
<dbReference type="EMBL" id="BC067051">
    <property type="protein sequence ID" value="AAH67051.1"/>
    <property type="molecule type" value="mRNA"/>
</dbReference>
<dbReference type="CCDS" id="CCDS16024.1"/>
<dbReference type="PIR" id="S37711">
    <property type="entry name" value="S37711"/>
</dbReference>
<dbReference type="RefSeq" id="NP_032475.2">
    <property type="nucleotide sequence ID" value="NM_008449.2"/>
</dbReference>
<dbReference type="PDB" id="1VFV">
    <property type="method" value="X-ray"/>
    <property type="resolution" value="1.85 A"/>
    <property type="chains" value="A=329-334"/>
</dbReference>
<dbReference type="PDB" id="1VFW">
    <property type="method" value="X-ray"/>
    <property type="resolution" value="2.30 A"/>
    <property type="chains" value="A=329-334"/>
</dbReference>
<dbReference type="PDB" id="1VFX">
    <property type="method" value="X-ray"/>
    <property type="resolution" value="2.55 A"/>
    <property type="chains" value="A=329-334"/>
</dbReference>
<dbReference type="PDB" id="1VFZ">
    <property type="method" value="X-ray"/>
    <property type="resolution" value="2.24 A"/>
    <property type="chains" value="A=329-334"/>
</dbReference>
<dbReference type="PDB" id="3J6H">
    <property type="method" value="EM"/>
    <property type="resolution" value="8.10 A"/>
    <property type="chains" value="K=1-345"/>
</dbReference>
<dbReference type="PDB" id="3WRD">
    <property type="method" value="X-ray"/>
    <property type="resolution" value="2.86 A"/>
    <property type="chains" value="A/B=1-334"/>
</dbReference>
<dbReference type="PDB" id="3X2T">
    <property type="method" value="X-ray"/>
    <property type="resolution" value="2.70 A"/>
    <property type="chains" value="A/B=1-334"/>
</dbReference>
<dbReference type="PDBsum" id="1VFV"/>
<dbReference type="PDBsum" id="1VFW"/>
<dbReference type="PDBsum" id="1VFX"/>
<dbReference type="PDBsum" id="1VFZ"/>
<dbReference type="PDBsum" id="3J6H"/>
<dbReference type="PDBsum" id="3WRD"/>
<dbReference type="PDBsum" id="3X2T"/>
<dbReference type="EMDB" id="EMD-5916"/>
<dbReference type="SMR" id="P28738"/>
<dbReference type="BioGRID" id="200947">
    <property type="interactions" value="25"/>
</dbReference>
<dbReference type="CORUM" id="P28738"/>
<dbReference type="FunCoup" id="P28738">
    <property type="interactions" value="1211"/>
</dbReference>
<dbReference type="IntAct" id="P28738">
    <property type="interactions" value="19"/>
</dbReference>
<dbReference type="MINT" id="P28738"/>
<dbReference type="STRING" id="10090.ENSMUSP00000028102"/>
<dbReference type="GlyGen" id="P28738">
    <property type="glycosylation" value="1 site, 1 N-linked glycan (1 site)"/>
</dbReference>
<dbReference type="iPTMnet" id="P28738"/>
<dbReference type="PhosphoSitePlus" id="P28738"/>
<dbReference type="SwissPalm" id="P28738"/>
<dbReference type="jPOST" id="P28738"/>
<dbReference type="PaxDb" id="10090-ENSMUSP00000028102"/>
<dbReference type="PeptideAtlas" id="P28738"/>
<dbReference type="ProteomicsDB" id="263540"/>
<dbReference type="Antibodypedia" id="33631">
    <property type="antibodies" value="141 antibodies from 21 providers"/>
</dbReference>
<dbReference type="DNASU" id="16574"/>
<dbReference type="Ensembl" id="ENSMUST00000028102.14">
    <property type="protein sequence ID" value="ENSMUSP00000028102.8"/>
    <property type="gene ID" value="ENSMUSG00000026764.16"/>
</dbReference>
<dbReference type="GeneID" id="16574"/>
<dbReference type="KEGG" id="mmu:16574"/>
<dbReference type="UCSC" id="uc008jpy.1">
    <property type="organism name" value="mouse"/>
</dbReference>
<dbReference type="AGR" id="MGI:1098269"/>
<dbReference type="CTD" id="3800"/>
<dbReference type="MGI" id="MGI:1098269">
    <property type="gene designation" value="Kif5c"/>
</dbReference>
<dbReference type="VEuPathDB" id="HostDB:ENSMUSG00000026764"/>
<dbReference type="eggNOG" id="KOG0240">
    <property type="taxonomic scope" value="Eukaryota"/>
</dbReference>
<dbReference type="GeneTree" id="ENSGT00940000158539"/>
<dbReference type="HOGENOM" id="CLU_001485_11_1_1"/>
<dbReference type="InParanoid" id="P28738"/>
<dbReference type="OMA" id="QKSAEPY"/>
<dbReference type="OrthoDB" id="3176171at2759"/>
<dbReference type="PhylomeDB" id="P28738"/>
<dbReference type="TreeFam" id="TF105225"/>
<dbReference type="BioGRID-ORCS" id="16574">
    <property type="hits" value="1 hit in 79 CRISPR screens"/>
</dbReference>
<dbReference type="CD-CODE" id="CE726F99">
    <property type="entry name" value="Postsynaptic density"/>
</dbReference>
<dbReference type="ChiTaRS" id="Kif5c">
    <property type="organism name" value="mouse"/>
</dbReference>
<dbReference type="EvolutionaryTrace" id="P28738"/>
<dbReference type="PRO" id="PR:P28738"/>
<dbReference type="Proteomes" id="UP000000589">
    <property type="component" value="Chromosome 2"/>
</dbReference>
<dbReference type="RNAct" id="P28738">
    <property type="molecule type" value="protein"/>
</dbReference>
<dbReference type="Bgee" id="ENSMUSG00000026764">
    <property type="expression patterns" value="Expressed in globus pallidus and 218 other cell types or tissues"/>
</dbReference>
<dbReference type="ExpressionAtlas" id="P28738">
    <property type="expression patterns" value="baseline and differential"/>
</dbReference>
<dbReference type="GO" id="GO:1904115">
    <property type="term" value="C:axon cytoplasm"/>
    <property type="evidence" value="ECO:0007669"/>
    <property type="project" value="GOC"/>
</dbReference>
<dbReference type="GO" id="GO:0044295">
    <property type="term" value="C:axonal growth cone"/>
    <property type="evidence" value="ECO:0000314"/>
    <property type="project" value="ARUK-UCL"/>
</dbReference>
<dbReference type="GO" id="GO:0035253">
    <property type="term" value="C:ciliary rootlet"/>
    <property type="evidence" value="ECO:0000314"/>
    <property type="project" value="MGI"/>
</dbReference>
<dbReference type="GO" id="GO:0005737">
    <property type="term" value="C:cytoplasm"/>
    <property type="evidence" value="ECO:0000314"/>
    <property type="project" value="MGI"/>
</dbReference>
<dbReference type="GO" id="GO:0032839">
    <property type="term" value="C:dendrite cytoplasm"/>
    <property type="evidence" value="ECO:0007669"/>
    <property type="project" value="GOC"/>
</dbReference>
<dbReference type="GO" id="GO:0150034">
    <property type="term" value="C:distal axon"/>
    <property type="evidence" value="ECO:0000314"/>
    <property type="project" value="ARUK-UCL"/>
</dbReference>
<dbReference type="GO" id="GO:0098982">
    <property type="term" value="C:GABA-ergic synapse"/>
    <property type="evidence" value="ECO:0007669"/>
    <property type="project" value="Ensembl"/>
</dbReference>
<dbReference type="GO" id="GO:0005871">
    <property type="term" value="C:kinesin complex"/>
    <property type="evidence" value="ECO:0000250"/>
    <property type="project" value="MGI"/>
</dbReference>
<dbReference type="GO" id="GO:0005874">
    <property type="term" value="C:microtubule"/>
    <property type="evidence" value="ECO:0007669"/>
    <property type="project" value="UniProtKB-KW"/>
</dbReference>
<dbReference type="GO" id="GO:0043005">
    <property type="term" value="C:neuron projection"/>
    <property type="evidence" value="ECO:0000314"/>
    <property type="project" value="MGI"/>
</dbReference>
<dbReference type="GO" id="GO:0043025">
    <property type="term" value="C:neuronal cell body"/>
    <property type="evidence" value="ECO:0000314"/>
    <property type="project" value="ARUK-UCL"/>
</dbReference>
<dbReference type="GO" id="GO:0099524">
    <property type="term" value="C:postsynaptic cytosol"/>
    <property type="evidence" value="ECO:0007669"/>
    <property type="project" value="Ensembl"/>
</dbReference>
<dbReference type="GO" id="GO:0034190">
    <property type="term" value="F:apolipoprotein receptor binding"/>
    <property type="evidence" value="ECO:0007669"/>
    <property type="project" value="Ensembl"/>
</dbReference>
<dbReference type="GO" id="GO:0005524">
    <property type="term" value="F:ATP binding"/>
    <property type="evidence" value="ECO:0007669"/>
    <property type="project" value="UniProtKB-KW"/>
</dbReference>
<dbReference type="GO" id="GO:0016887">
    <property type="term" value="F:ATP hydrolysis activity"/>
    <property type="evidence" value="ECO:0007669"/>
    <property type="project" value="Ensembl"/>
</dbReference>
<dbReference type="GO" id="GO:0008017">
    <property type="term" value="F:microtubule binding"/>
    <property type="evidence" value="ECO:0007669"/>
    <property type="project" value="Ensembl"/>
</dbReference>
<dbReference type="GO" id="GO:0003777">
    <property type="term" value="F:microtubule motor activity"/>
    <property type="evidence" value="ECO:0000304"/>
    <property type="project" value="MGI"/>
</dbReference>
<dbReference type="GO" id="GO:0099641">
    <property type="term" value="P:anterograde axonal protein transport"/>
    <property type="evidence" value="ECO:0000250"/>
    <property type="project" value="UniProtKB"/>
</dbReference>
<dbReference type="GO" id="GO:0098964">
    <property type="term" value="P:anterograde dendritic transport of messenger ribonucleoprotein complex"/>
    <property type="evidence" value="ECO:0000314"/>
    <property type="project" value="SynGO"/>
</dbReference>
<dbReference type="GO" id="GO:0008298">
    <property type="term" value="P:intracellular mRNA localization"/>
    <property type="evidence" value="ECO:0007669"/>
    <property type="project" value="Ensembl"/>
</dbReference>
<dbReference type="GO" id="GO:0008045">
    <property type="term" value="P:motor neuron axon guidance"/>
    <property type="evidence" value="ECO:0000315"/>
    <property type="project" value="MGI"/>
</dbReference>
<dbReference type="GO" id="GO:0051028">
    <property type="term" value="P:mRNA transport"/>
    <property type="evidence" value="ECO:0000315"/>
    <property type="project" value="UniProtKB"/>
</dbReference>
<dbReference type="CDD" id="cd23649">
    <property type="entry name" value="Khc_CBD_cc"/>
    <property type="match status" value="1"/>
</dbReference>
<dbReference type="CDD" id="cd01369">
    <property type="entry name" value="KISc_KHC_KIF5"/>
    <property type="match status" value="1"/>
</dbReference>
<dbReference type="FunFam" id="3.40.850.10:FF:000009">
    <property type="entry name" value="Kinesin-like protein"/>
    <property type="match status" value="1"/>
</dbReference>
<dbReference type="Gene3D" id="6.10.250.1590">
    <property type="match status" value="1"/>
</dbReference>
<dbReference type="Gene3D" id="3.40.850.10">
    <property type="entry name" value="Kinesin motor domain"/>
    <property type="match status" value="1"/>
</dbReference>
<dbReference type="InterPro" id="IPR027640">
    <property type="entry name" value="Kinesin-like_fam"/>
</dbReference>
<dbReference type="InterPro" id="IPR019821">
    <property type="entry name" value="Kinesin_motor_CS"/>
</dbReference>
<dbReference type="InterPro" id="IPR001752">
    <property type="entry name" value="Kinesin_motor_dom"/>
</dbReference>
<dbReference type="InterPro" id="IPR036961">
    <property type="entry name" value="Kinesin_motor_dom_sf"/>
</dbReference>
<dbReference type="InterPro" id="IPR027417">
    <property type="entry name" value="P-loop_NTPase"/>
</dbReference>
<dbReference type="PANTHER" id="PTHR47968">
    <property type="entry name" value="CENTROMERE PROTEIN E"/>
    <property type="match status" value="1"/>
</dbReference>
<dbReference type="PANTHER" id="PTHR47968:SF70">
    <property type="entry name" value="KINESIN HEAVY CHAIN ISOFORM 5C"/>
    <property type="match status" value="1"/>
</dbReference>
<dbReference type="Pfam" id="PF00225">
    <property type="entry name" value="Kinesin"/>
    <property type="match status" value="1"/>
</dbReference>
<dbReference type="PRINTS" id="PR00380">
    <property type="entry name" value="KINESINHEAVY"/>
</dbReference>
<dbReference type="SMART" id="SM00129">
    <property type="entry name" value="KISc"/>
    <property type="match status" value="1"/>
</dbReference>
<dbReference type="SUPFAM" id="SSF52540">
    <property type="entry name" value="P-loop containing nucleoside triphosphate hydrolases"/>
    <property type="match status" value="1"/>
</dbReference>
<dbReference type="PROSITE" id="PS00411">
    <property type="entry name" value="KINESIN_MOTOR_1"/>
    <property type="match status" value="1"/>
</dbReference>
<dbReference type="PROSITE" id="PS50067">
    <property type="entry name" value="KINESIN_MOTOR_2"/>
    <property type="match status" value="1"/>
</dbReference>
<name>KIF5C_MOUSE</name>
<organism>
    <name type="scientific">Mus musculus</name>
    <name type="common">Mouse</name>
    <dbReference type="NCBI Taxonomy" id="10090"/>
    <lineage>
        <taxon>Eukaryota</taxon>
        <taxon>Metazoa</taxon>
        <taxon>Chordata</taxon>
        <taxon>Craniata</taxon>
        <taxon>Vertebrata</taxon>
        <taxon>Euteleostomi</taxon>
        <taxon>Mammalia</taxon>
        <taxon>Eutheria</taxon>
        <taxon>Euarchontoglires</taxon>
        <taxon>Glires</taxon>
        <taxon>Rodentia</taxon>
        <taxon>Myomorpha</taxon>
        <taxon>Muroidea</taxon>
        <taxon>Muridae</taxon>
        <taxon>Murinae</taxon>
        <taxon>Mus</taxon>
        <taxon>Mus</taxon>
    </lineage>
</organism>
<evidence type="ECO:0000250" key="1">
    <source>
        <dbReference type="UniProtKB" id="O60282"/>
    </source>
</evidence>
<evidence type="ECO:0000250" key="2">
    <source>
        <dbReference type="UniProtKB" id="P56536"/>
    </source>
</evidence>
<evidence type="ECO:0000255" key="3">
    <source>
        <dbReference type="PROSITE-ProRule" id="PRU00283"/>
    </source>
</evidence>
<evidence type="ECO:0000256" key="4">
    <source>
        <dbReference type="SAM" id="MobiDB-lite"/>
    </source>
</evidence>
<evidence type="ECO:0000269" key="5">
    <source>
    </source>
</evidence>
<evidence type="ECO:0000269" key="6">
    <source>
    </source>
</evidence>
<evidence type="ECO:0000269" key="7">
    <source>
    </source>
</evidence>
<evidence type="ECO:0000269" key="8">
    <source>
    </source>
</evidence>
<evidence type="ECO:0000305" key="9"/>
<evidence type="ECO:0007744" key="10">
    <source>
    </source>
</evidence>
<evidence type="ECO:0007829" key="11">
    <source>
        <dbReference type="PDB" id="3WRD"/>
    </source>
</evidence>
<evidence type="ECO:0007829" key="12">
    <source>
        <dbReference type="PDB" id="3X2T"/>
    </source>
</evidence>